<accession>P0DP87</accession>
<gene>
    <name type="primary">APOA2</name>
</gene>
<protein>
    <recommendedName>
        <fullName>Apolipoprotein A-II</fullName>
        <shortName>Apo-AII</shortName>
        <shortName>ApoA-II</shortName>
    </recommendedName>
    <alternativeName>
        <fullName>Apolipoprotein A2</fullName>
    </alternativeName>
    <component>
        <recommendedName>
            <fullName>Proapolipoprotein A-II</fullName>
            <shortName>ProapoA-II</shortName>
        </recommendedName>
    </component>
    <component>
        <recommendedName>
            <fullName>Truncated apolipoprotein A-II</fullName>
        </recommendedName>
    </component>
</protein>
<dbReference type="EMBL" id="JABR01037107">
    <property type="status" value="NOT_ANNOTATED_CDS"/>
    <property type="molecule type" value="Genomic_DNA"/>
</dbReference>
<dbReference type="RefSeq" id="XP_010365434.1">
    <property type="nucleotide sequence ID" value="XM_010367132.1"/>
</dbReference>
<dbReference type="SMR" id="P0DP87"/>
<dbReference type="STRING" id="61622.ENSRROP00000008552"/>
<dbReference type="Ensembl" id="ENSRROT00000032623.1">
    <property type="protein sequence ID" value="ENSRROP00000008547.1"/>
    <property type="gene ID" value="ENSRROG00000028731.1"/>
</dbReference>
<dbReference type="Ensembl" id="ENSRROT00000032625.1">
    <property type="protein sequence ID" value="ENSRROP00000008549.1"/>
    <property type="gene ID" value="ENSRROG00000028731.1"/>
</dbReference>
<dbReference type="GeneID" id="104665343"/>
<dbReference type="KEGG" id="rro:104665343"/>
<dbReference type="CTD" id="336"/>
<dbReference type="GeneTree" id="ENSGT00390000003306"/>
<dbReference type="OMA" id="LTICSFE"/>
<dbReference type="OrthoDB" id="9450770at2759"/>
<dbReference type="Proteomes" id="UP000233200">
    <property type="component" value="Unplaced"/>
</dbReference>
<dbReference type="GO" id="GO:0034366">
    <property type="term" value="C:spherical high-density lipoprotein particle"/>
    <property type="evidence" value="ECO:0007669"/>
    <property type="project" value="TreeGrafter"/>
</dbReference>
<dbReference type="GO" id="GO:0120020">
    <property type="term" value="F:cholesterol transfer activity"/>
    <property type="evidence" value="ECO:0007669"/>
    <property type="project" value="TreeGrafter"/>
</dbReference>
<dbReference type="GO" id="GO:0008035">
    <property type="term" value="F:high-density lipoprotein particle binding"/>
    <property type="evidence" value="ECO:0007669"/>
    <property type="project" value="TreeGrafter"/>
</dbReference>
<dbReference type="GO" id="GO:0008289">
    <property type="term" value="F:lipid binding"/>
    <property type="evidence" value="ECO:0007669"/>
    <property type="project" value="InterPro"/>
</dbReference>
<dbReference type="GO" id="GO:0042632">
    <property type="term" value="P:cholesterol homeostasis"/>
    <property type="evidence" value="ECO:0007669"/>
    <property type="project" value="TreeGrafter"/>
</dbReference>
<dbReference type="GO" id="GO:0030301">
    <property type="term" value="P:cholesterol transport"/>
    <property type="evidence" value="ECO:0007669"/>
    <property type="project" value="TreeGrafter"/>
</dbReference>
<dbReference type="GO" id="GO:0042157">
    <property type="term" value="P:lipoprotein metabolic process"/>
    <property type="evidence" value="ECO:0007669"/>
    <property type="project" value="InterPro"/>
</dbReference>
<dbReference type="GO" id="GO:0050766">
    <property type="term" value="P:positive regulation of phagocytosis"/>
    <property type="evidence" value="ECO:0000250"/>
    <property type="project" value="UniProtKB"/>
</dbReference>
<dbReference type="GO" id="GO:0050821">
    <property type="term" value="P:protein stabilization"/>
    <property type="evidence" value="ECO:0000250"/>
    <property type="project" value="UniProtKB"/>
</dbReference>
<dbReference type="Gene3D" id="6.10.250.100">
    <property type="match status" value="1"/>
</dbReference>
<dbReference type="InterPro" id="IPR006801">
    <property type="entry name" value="ApoA-II"/>
</dbReference>
<dbReference type="InterPro" id="IPR036172">
    <property type="entry name" value="ApoA-II_sf"/>
</dbReference>
<dbReference type="PANTHER" id="PTHR11027">
    <property type="entry name" value="APOLIPOPROTEIN A-II"/>
    <property type="match status" value="1"/>
</dbReference>
<dbReference type="PANTHER" id="PTHR11027:SF0">
    <property type="entry name" value="APOLIPOPROTEIN A-II"/>
    <property type="match status" value="1"/>
</dbReference>
<dbReference type="Pfam" id="PF04711">
    <property type="entry name" value="ApoA-II"/>
    <property type="match status" value="1"/>
</dbReference>
<dbReference type="SUPFAM" id="SSF82936">
    <property type="entry name" value="Apolipoprotein A-II"/>
    <property type="match status" value="1"/>
</dbReference>
<keyword id="KW-0165">Cleavage on pair of basic residues</keyword>
<keyword id="KW-0345">HDL</keyword>
<keyword id="KW-0445">Lipid transport</keyword>
<keyword id="KW-0558">Oxidation</keyword>
<keyword id="KW-0597">Phosphoprotein</keyword>
<keyword id="KW-1185">Reference proteome</keyword>
<keyword id="KW-0964">Secreted</keyword>
<keyword id="KW-0732">Signal</keyword>
<keyword id="KW-0813">Transport</keyword>
<feature type="signal peptide" evidence="3">
    <location>
        <begin position="1"/>
        <end position="18"/>
    </location>
</feature>
<feature type="chain" id="PRO_0000441391" description="Proapolipoprotein A-II" evidence="2">
    <location>
        <begin position="19"/>
        <end position="100"/>
    </location>
</feature>
<feature type="chain" id="PRO_0000441392" description="Apolipoprotein A-II" evidence="1">
    <location>
        <begin position="24"/>
        <end position="100"/>
    </location>
</feature>
<feature type="chain" id="PRO_0000441393" description="Truncated apolipoprotein A-II" evidence="1">
    <location>
        <begin position="24"/>
        <end position="99"/>
    </location>
</feature>
<feature type="modified residue" description="Methionine sulfoxide" evidence="1">
    <location>
        <position position="49"/>
    </location>
</feature>
<feature type="modified residue" description="Phosphoserine" evidence="1">
    <location>
        <position position="54"/>
    </location>
</feature>
<feature type="modified residue" description="Phosphoserine" evidence="1">
    <location>
        <position position="68"/>
    </location>
</feature>
<evidence type="ECO:0000250" key="1">
    <source>
        <dbReference type="UniProtKB" id="P02652"/>
    </source>
</evidence>
<evidence type="ECO:0000250" key="2">
    <source>
        <dbReference type="UniProtKB" id="P18656"/>
    </source>
</evidence>
<evidence type="ECO:0000255" key="3"/>
<evidence type="ECO:0000305" key="4"/>
<sequence length="100" mass="11214">MKLLAATVLLLTICSLEGALVRRQAEEPSVESLVSQYFQTVTDYGKDLMEKVKSPELQAQAKAYFEKSKEQLTPLVKKAGTDLVNFLSYFVELRTQPATQ</sequence>
<proteinExistence type="inferred from homology"/>
<organism>
    <name type="scientific">Rhinopithecus roxellana</name>
    <name type="common">Golden snub-nosed monkey</name>
    <name type="synonym">Pygathrix roxellana</name>
    <dbReference type="NCBI Taxonomy" id="61622"/>
    <lineage>
        <taxon>Eukaryota</taxon>
        <taxon>Metazoa</taxon>
        <taxon>Chordata</taxon>
        <taxon>Craniata</taxon>
        <taxon>Vertebrata</taxon>
        <taxon>Euteleostomi</taxon>
        <taxon>Mammalia</taxon>
        <taxon>Eutheria</taxon>
        <taxon>Euarchontoglires</taxon>
        <taxon>Primates</taxon>
        <taxon>Haplorrhini</taxon>
        <taxon>Catarrhini</taxon>
        <taxon>Cercopithecidae</taxon>
        <taxon>Colobinae</taxon>
        <taxon>Rhinopithecus</taxon>
    </lineage>
</organism>
<reference key="1">
    <citation type="submission" date="2014-01" db="EMBL/GenBank/DDBJ databases">
        <authorList>
            <person name="Wang B."/>
            <person name="Zhou X."/>
        </authorList>
    </citation>
    <scope>NUCLEOTIDE SEQUENCE [LARGE SCALE GENOMIC DNA]</scope>
</reference>
<reference key="2">
    <citation type="unpublished observations" date="2017-06">
        <authorList>
            <person name="Puppione D.L."/>
        </authorList>
    </citation>
    <scope>IDENTIFICATION</scope>
</reference>
<name>APOA2_RHIRO</name>
<comment type="function">
    <text evidence="2">May stabilize HDL (high density lipoprotein) structure by its association with lipids, and affect the HDL metabolism.</text>
</comment>
<comment type="subunit">
    <text evidence="1">Monomer. Interacts with NAXE and NDRG1.</text>
</comment>
<comment type="subcellular location">
    <subcellularLocation>
        <location evidence="1">Secreted</location>
    </subcellularLocation>
</comment>
<comment type="similarity">
    <text evidence="4">Belongs to the apolipoprotein A2 family.</text>
</comment>